<comment type="function">
    <text evidence="1">Phospholipase A2 (PA2) inhibitor. Inhibits the enzymatic activity of PA2 of Deinagkistrodon acutus. Also shows a wide anti-hemorrhage activities to D.acutus, Naja atra and Agkistrodon halys venom. The native protein is more potent than the recombinant one.</text>
</comment>
<comment type="subunit">
    <text evidence="6">Heterodimer of subunit A and subunit B.</text>
</comment>
<comment type="subcellular location">
    <subcellularLocation>
        <location evidence="6">Secreted</location>
    </subcellularLocation>
    <text evidence="6">Secreted in blood plasma.</text>
</comment>
<comment type="biotechnology">
    <text evidence="4">Monoclonal antibodies against this protein have been prepared. They permit to discover phospholipase A2 inhibitor gamma in snake sera and facilitate research to develop new antivenom.</text>
</comment>
<comment type="similarity">
    <text evidence="6">Belongs to the CNF-like-inhibitor family.</text>
</comment>
<comment type="caution">
    <text evidence="6">Two phospholipase A2 inhibitor gamma subunit A that have only 75% identities have been described by the group of Huang. They are shown in UniProt as subunit A1 (AC I6PG79) and subunit A2 (AC P0DQX3).</text>
</comment>
<organism>
    <name type="scientific">Trimerodytes annularis</name>
    <name type="common">Red-bellied annulate keelback</name>
    <name type="synonym">Tropidonotus annularis</name>
    <dbReference type="NCBI Taxonomy" id="2678873"/>
    <lineage>
        <taxon>Eukaryota</taxon>
        <taxon>Metazoa</taxon>
        <taxon>Chordata</taxon>
        <taxon>Craniata</taxon>
        <taxon>Vertebrata</taxon>
        <taxon>Euteleostomi</taxon>
        <taxon>Lepidosauria</taxon>
        <taxon>Squamata</taxon>
        <taxon>Bifurcata</taxon>
        <taxon>Unidentata</taxon>
        <taxon>Episquamata</taxon>
        <taxon>Toxicofera</taxon>
        <taxon>Serpentes</taxon>
        <taxon>Colubroidea</taxon>
        <taxon>Colubridae</taxon>
        <taxon>Natricinae</taxon>
        <taxon>Trimerodytes</taxon>
    </lineage>
</organism>
<evidence type="ECO:0000250" key="1">
    <source>
        <dbReference type="UniProtKB" id="I6PG79"/>
    </source>
</evidence>
<evidence type="ECO:0000250" key="2">
    <source>
        <dbReference type="UniProtKB" id="Q7LZI1"/>
    </source>
</evidence>
<evidence type="ECO:0000255" key="3">
    <source>
        <dbReference type="PROSITE-ProRule" id="PRU00498"/>
    </source>
</evidence>
<evidence type="ECO:0000269" key="4">
    <source>
    </source>
</evidence>
<evidence type="ECO:0000303" key="5">
    <source>
    </source>
</evidence>
<evidence type="ECO:0000305" key="6"/>
<name>PLGA2_TRIAE</name>
<dbReference type="SMR" id="P0DQX3"/>
<dbReference type="GO" id="GO:0005576">
    <property type="term" value="C:extracellular region"/>
    <property type="evidence" value="ECO:0007669"/>
    <property type="project" value="UniProtKB-SubCell"/>
</dbReference>
<dbReference type="GO" id="GO:0016787">
    <property type="term" value="F:hydrolase activity"/>
    <property type="evidence" value="ECO:0007669"/>
    <property type="project" value="UniProtKB-KW"/>
</dbReference>
<dbReference type="GO" id="GO:0019834">
    <property type="term" value="F:phospholipase A2 inhibitor activity"/>
    <property type="evidence" value="ECO:0007669"/>
    <property type="project" value="UniProtKB-KW"/>
</dbReference>
<dbReference type="Gene3D" id="2.10.60.10">
    <property type="entry name" value="CD59"/>
    <property type="match status" value="1"/>
</dbReference>
<dbReference type="InterPro" id="IPR050918">
    <property type="entry name" value="CNF-like_PLA2_Inhibitor"/>
</dbReference>
<dbReference type="InterPro" id="IPR016054">
    <property type="entry name" value="LY6_UPA_recep-like"/>
</dbReference>
<dbReference type="InterPro" id="IPR016338">
    <property type="entry name" value="PLipase_A2-inh_b-type"/>
</dbReference>
<dbReference type="InterPro" id="IPR004126">
    <property type="entry name" value="PLipase_A2_inh_N"/>
</dbReference>
<dbReference type="InterPro" id="IPR045860">
    <property type="entry name" value="Snake_toxin-like_sf"/>
</dbReference>
<dbReference type="PANTHER" id="PTHR20914:SF9">
    <property type="entry name" value="COILED, ISOFORM A"/>
    <property type="match status" value="1"/>
</dbReference>
<dbReference type="PANTHER" id="PTHR20914">
    <property type="entry name" value="LY6/PLAUR DOMAIN-CONTAINING PROTEIN 8"/>
    <property type="match status" value="1"/>
</dbReference>
<dbReference type="Pfam" id="PF02988">
    <property type="entry name" value="PLA2_inh"/>
    <property type="match status" value="1"/>
</dbReference>
<dbReference type="Pfam" id="PF00021">
    <property type="entry name" value="UPAR_LY6"/>
    <property type="match status" value="1"/>
</dbReference>
<dbReference type="PIRSF" id="PIRSF002023">
    <property type="entry name" value="PLA2_inhib_alpha/gamma"/>
    <property type="match status" value="1"/>
</dbReference>
<dbReference type="SMART" id="SM00134">
    <property type="entry name" value="LU"/>
    <property type="match status" value="1"/>
</dbReference>
<dbReference type="SUPFAM" id="SSF57302">
    <property type="entry name" value="Snake toxin-like"/>
    <property type="match status" value="2"/>
</dbReference>
<keyword id="KW-1015">Disulfide bond</keyword>
<keyword id="KW-0325">Glycoprotein</keyword>
<keyword id="KW-0378">Hydrolase</keyword>
<keyword id="KW-0593">Phospholipase A2 inhibitor</keyword>
<keyword id="KW-0964">Secreted</keyword>
<feature type="chain" id="PRO_0000457574" description="Phospholipase A2 inhibitor gamma subunit A2">
    <location>
        <begin position="1"/>
        <end position="182"/>
    </location>
</feature>
<feature type="glycosylation site" description="N-linked (GlcNAc...) asparagine" evidence="3">
    <location>
        <position position="157"/>
    </location>
</feature>
<feature type="disulfide bond" evidence="2">
    <location>
        <begin position="3"/>
        <end position="27"/>
    </location>
</feature>
<feature type="disulfide bond" evidence="2">
    <location>
        <begin position="6"/>
        <end position="13"/>
    </location>
</feature>
<feature type="disulfide bond" evidence="2">
    <location>
        <begin position="20"/>
        <end position="48"/>
    </location>
</feature>
<feature type="disulfide bond" evidence="2">
    <location>
        <begin position="54"/>
        <end position="75"/>
    </location>
</feature>
<feature type="disulfide bond" evidence="2">
    <location>
        <begin position="76"/>
        <end position="81"/>
    </location>
</feature>
<feature type="disulfide bond" evidence="2">
    <location>
        <begin position="99"/>
        <end position="124"/>
    </location>
</feature>
<feature type="disulfide bond" evidence="2">
    <location>
        <begin position="117"/>
        <end position="146"/>
    </location>
</feature>
<feature type="disulfide bond" evidence="2">
    <location>
        <begin position="150"/>
        <end position="172"/>
    </location>
</feature>
<proteinExistence type="evidence at protein level"/>
<accession>P0DQX3</accession>
<reference key="1">
    <citation type="journal article" date="2017" name="J. Venom. Anim. Toxins Incl. Trop. Dis.">
        <title>Preparation of monoclonal antibodies against gamma-type phospholipase A2 inhibitors and immunodetection of these proteins in snake blood.</title>
        <authorList>
            <person name="Li J."/>
            <person name="Xiong Y."/>
            <person name="Sun S."/>
            <person name="Yu L."/>
            <person name="Huang C."/>
        </authorList>
    </citation>
    <scope>NUCLEOTIDE SEQUENCE [MRNA]</scope>
    <scope>BIOTECHNOLOGY</scope>
</reference>
<sequence>RSCEICHNLGKDCEGYSTECDSPEDQCGMVLLEVSPAPISFRTVHRNCFSSSLCKLEQFDVNLGHDAYFRGRIHCCEEEKCEVNSFPGLPFSQLNGYSCPGVLGLFSEDSSEHEALCRGTETKCIEIVGYRKERFPGDIAYNIKGCTSSCPVLRLSNRTHEANRNDLIKVACTDASKTTPSE</sequence>
<protein>
    <recommendedName>
        <fullName evidence="5 6">Phospholipase A2 inhibitor gamma subunit A2</fullName>
    </recommendedName>
    <alternativeName>
        <fullName evidence="5 6">PLI-gamma A2</fullName>
    </alternativeName>
    <alternativeName>
        <fullName evidence="6">gamma-PLI A2</fullName>
    </alternativeName>
</protein>